<dbReference type="EC" id="7.1.1.-" evidence="1"/>
<dbReference type="EMBL" id="AL939120">
    <property type="protein sequence ID" value="CAB44523.1"/>
    <property type="molecule type" value="Genomic_DNA"/>
</dbReference>
<dbReference type="PIR" id="T34616">
    <property type="entry name" value="T34616"/>
</dbReference>
<dbReference type="RefSeq" id="NP_628732.1">
    <property type="nucleotide sequence ID" value="NC_003888.3"/>
</dbReference>
<dbReference type="SMR" id="Q9XAR2"/>
<dbReference type="FunCoup" id="Q9XAR2">
    <property type="interactions" value="350"/>
</dbReference>
<dbReference type="STRING" id="100226.gene:17762215"/>
<dbReference type="PaxDb" id="100226-SCO4570"/>
<dbReference type="KEGG" id="sco:SCO4570"/>
<dbReference type="PATRIC" id="fig|100226.15.peg.4642"/>
<dbReference type="eggNOG" id="COG1143">
    <property type="taxonomic scope" value="Bacteria"/>
</dbReference>
<dbReference type="HOGENOM" id="CLU_067218_4_0_11"/>
<dbReference type="InParanoid" id="Q9XAR2"/>
<dbReference type="OrthoDB" id="9808559at2"/>
<dbReference type="PhylomeDB" id="Q9XAR2"/>
<dbReference type="Proteomes" id="UP000001973">
    <property type="component" value="Chromosome"/>
</dbReference>
<dbReference type="GO" id="GO:0005886">
    <property type="term" value="C:plasma membrane"/>
    <property type="evidence" value="ECO:0007669"/>
    <property type="project" value="UniProtKB-SubCell"/>
</dbReference>
<dbReference type="GO" id="GO:0051539">
    <property type="term" value="F:4 iron, 4 sulfur cluster binding"/>
    <property type="evidence" value="ECO:0007669"/>
    <property type="project" value="UniProtKB-KW"/>
</dbReference>
<dbReference type="GO" id="GO:0005506">
    <property type="term" value="F:iron ion binding"/>
    <property type="evidence" value="ECO:0007669"/>
    <property type="project" value="UniProtKB-UniRule"/>
</dbReference>
<dbReference type="GO" id="GO:0050136">
    <property type="term" value="F:NADH:ubiquinone reductase (non-electrogenic) activity"/>
    <property type="evidence" value="ECO:0007669"/>
    <property type="project" value="UniProtKB-UniRule"/>
</dbReference>
<dbReference type="GO" id="GO:0048038">
    <property type="term" value="F:quinone binding"/>
    <property type="evidence" value="ECO:0007669"/>
    <property type="project" value="UniProtKB-KW"/>
</dbReference>
<dbReference type="GO" id="GO:0009060">
    <property type="term" value="P:aerobic respiration"/>
    <property type="evidence" value="ECO:0000318"/>
    <property type="project" value="GO_Central"/>
</dbReference>
<dbReference type="FunFam" id="3.30.70.3270:FF:000007">
    <property type="entry name" value="NADH-quinone oxidoreductase subunit I"/>
    <property type="match status" value="1"/>
</dbReference>
<dbReference type="Gene3D" id="3.30.70.3270">
    <property type="match status" value="1"/>
</dbReference>
<dbReference type="HAMAP" id="MF_01351">
    <property type="entry name" value="NDH1_NuoI"/>
    <property type="match status" value="1"/>
</dbReference>
<dbReference type="InterPro" id="IPR017896">
    <property type="entry name" value="4Fe4S_Fe-S-bd"/>
</dbReference>
<dbReference type="InterPro" id="IPR017900">
    <property type="entry name" value="4Fe4S_Fe_S_CS"/>
</dbReference>
<dbReference type="InterPro" id="IPR010226">
    <property type="entry name" value="NADH_quinone_OxRdtase_chainI"/>
</dbReference>
<dbReference type="NCBIfam" id="TIGR01971">
    <property type="entry name" value="NuoI"/>
    <property type="match status" value="1"/>
</dbReference>
<dbReference type="NCBIfam" id="NF004537">
    <property type="entry name" value="PRK05888.1-3"/>
    <property type="match status" value="1"/>
</dbReference>
<dbReference type="PANTHER" id="PTHR10849:SF20">
    <property type="entry name" value="NADH DEHYDROGENASE [UBIQUINONE] IRON-SULFUR PROTEIN 8, MITOCHONDRIAL"/>
    <property type="match status" value="1"/>
</dbReference>
<dbReference type="PANTHER" id="PTHR10849">
    <property type="entry name" value="NADH DEHYDROGENASE UBIQUINONE IRON-SULFUR PROTEIN 8, MITOCHONDRIAL"/>
    <property type="match status" value="1"/>
</dbReference>
<dbReference type="Pfam" id="PF12838">
    <property type="entry name" value="Fer4_7"/>
    <property type="match status" value="1"/>
</dbReference>
<dbReference type="SUPFAM" id="SSF54862">
    <property type="entry name" value="4Fe-4S ferredoxins"/>
    <property type="match status" value="1"/>
</dbReference>
<dbReference type="PROSITE" id="PS00198">
    <property type="entry name" value="4FE4S_FER_1"/>
    <property type="match status" value="2"/>
</dbReference>
<dbReference type="PROSITE" id="PS51379">
    <property type="entry name" value="4FE4S_FER_2"/>
    <property type="match status" value="2"/>
</dbReference>
<name>NUOI1_STRCO</name>
<organism>
    <name type="scientific">Streptomyces coelicolor (strain ATCC BAA-471 / A3(2) / M145)</name>
    <dbReference type="NCBI Taxonomy" id="100226"/>
    <lineage>
        <taxon>Bacteria</taxon>
        <taxon>Bacillati</taxon>
        <taxon>Actinomycetota</taxon>
        <taxon>Actinomycetes</taxon>
        <taxon>Kitasatosporales</taxon>
        <taxon>Streptomycetaceae</taxon>
        <taxon>Streptomyces</taxon>
        <taxon>Streptomyces albidoflavus group</taxon>
    </lineage>
</organism>
<reference key="1">
    <citation type="journal article" date="2002" name="Nature">
        <title>Complete genome sequence of the model actinomycete Streptomyces coelicolor A3(2).</title>
        <authorList>
            <person name="Bentley S.D."/>
            <person name="Chater K.F."/>
            <person name="Cerdeno-Tarraga A.-M."/>
            <person name="Challis G.L."/>
            <person name="Thomson N.R."/>
            <person name="James K.D."/>
            <person name="Harris D.E."/>
            <person name="Quail M.A."/>
            <person name="Kieser H."/>
            <person name="Harper D."/>
            <person name="Bateman A."/>
            <person name="Brown S."/>
            <person name="Chandra G."/>
            <person name="Chen C.W."/>
            <person name="Collins M."/>
            <person name="Cronin A."/>
            <person name="Fraser A."/>
            <person name="Goble A."/>
            <person name="Hidalgo J."/>
            <person name="Hornsby T."/>
            <person name="Howarth S."/>
            <person name="Huang C.-H."/>
            <person name="Kieser T."/>
            <person name="Larke L."/>
            <person name="Murphy L.D."/>
            <person name="Oliver K."/>
            <person name="O'Neil S."/>
            <person name="Rabbinowitsch E."/>
            <person name="Rajandream M.A."/>
            <person name="Rutherford K.M."/>
            <person name="Rutter S."/>
            <person name="Seeger K."/>
            <person name="Saunders D."/>
            <person name="Sharp S."/>
            <person name="Squares R."/>
            <person name="Squares S."/>
            <person name="Taylor K."/>
            <person name="Warren T."/>
            <person name="Wietzorrek A."/>
            <person name="Woodward J.R."/>
            <person name="Barrell B.G."/>
            <person name="Parkhill J."/>
            <person name="Hopwood D.A."/>
        </authorList>
    </citation>
    <scope>NUCLEOTIDE SEQUENCE [LARGE SCALE GENOMIC DNA]</scope>
    <source>
        <strain>ATCC BAA-471 / A3(2) / M145</strain>
    </source>
</reference>
<proteinExistence type="inferred from homology"/>
<accession>Q9XAR2</accession>
<protein>
    <recommendedName>
        <fullName evidence="1">NADH-quinone oxidoreductase subunit I 1</fullName>
        <ecNumber evidence="1">7.1.1.-</ecNumber>
    </recommendedName>
    <alternativeName>
        <fullName evidence="1">NADH dehydrogenase I subunit I 1</fullName>
    </alternativeName>
    <alternativeName>
        <fullName evidence="1">NDH-1 subunit I 1</fullName>
    </alternativeName>
</protein>
<keyword id="KW-0004">4Fe-4S</keyword>
<keyword id="KW-1003">Cell membrane</keyword>
<keyword id="KW-0408">Iron</keyword>
<keyword id="KW-0411">Iron-sulfur</keyword>
<keyword id="KW-0472">Membrane</keyword>
<keyword id="KW-0479">Metal-binding</keyword>
<keyword id="KW-0520">NAD</keyword>
<keyword id="KW-0874">Quinone</keyword>
<keyword id="KW-1185">Reference proteome</keyword>
<keyword id="KW-0677">Repeat</keyword>
<keyword id="KW-1278">Translocase</keyword>
<keyword id="KW-0830">Ubiquinone</keyword>
<evidence type="ECO:0000255" key="1">
    <source>
        <dbReference type="HAMAP-Rule" id="MF_01351"/>
    </source>
</evidence>
<evidence type="ECO:0000256" key="2">
    <source>
        <dbReference type="SAM" id="MobiDB-lite"/>
    </source>
</evidence>
<comment type="function">
    <text evidence="1">NDH-1 shuttles electrons from NADH, via FMN and iron-sulfur (Fe-S) centers, to quinones in the respiratory chain. The immediate electron acceptor for the enzyme in this species is believed to be ubiquinone. Couples the redox reaction to proton translocation (for every two electrons transferred, four hydrogen ions are translocated across the cytoplasmic membrane), and thus conserves the redox energy in a proton gradient.</text>
</comment>
<comment type="catalytic activity">
    <reaction evidence="1">
        <text>a quinone + NADH + 5 H(+)(in) = a quinol + NAD(+) + 4 H(+)(out)</text>
        <dbReference type="Rhea" id="RHEA:57888"/>
        <dbReference type="ChEBI" id="CHEBI:15378"/>
        <dbReference type="ChEBI" id="CHEBI:24646"/>
        <dbReference type="ChEBI" id="CHEBI:57540"/>
        <dbReference type="ChEBI" id="CHEBI:57945"/>
        <dbReference type="ChEBI" id="CHEBI:132124"/>
    </reaction>
</comment>
<comment type="cofactor">
    <cofactor evidence="1">
        <name>[4Fe-4S] cluster</name>
        <dbReference type="ChEBI" id="CHEBI:49883"/>
    </cofactor>
    <text evidence="1">Binds 2 [4Fe-4S] clusters per subunit.</text>
</comment>
<comment type="subunit">
    <text evidence="1">NDH-1 is composed of 14 different subunits. Subunits NuoA, H, J, K, L, M, N constitute the membrane sector of the complex.</text>
</comment>
<comment type="subcellular location">
    <subcellularLocation>
        <location evidence="1">Cell membrane</location>
        <topology evidence="1">Peripheral membrane protein</topology>
    </subcellularLocation>
</comment>
<comment type="similarity">
    <text evidence="1">Belongs to the complex I 23 kDa subunit family.</text>
</comment>
<feature type="chain" id="PRO_0000245751" description="NADH-quinone oxidoreductase subunit I 1">
    <location>
        <begin position="1"/>
        <end position="211"/>
    </location>
</feature>
<feature type="domain" description="4Fe-4S ferredoxin-type 1" evidence="1">
    <location>
        <begin position="50"/>
        <end position="80"/>
    </location>
</feature>
<feature type="domain" description="4Fe-4S ferredoxin-type 2" evidence="1">
    <location>
        <begin position="96"/>
        <end position="125"/>
    </location>
</feature>
<feature type="region of interest" description="Disordered" evidence="2">
    <location>
        <begin position="192"/>
        <end position="211"/>
    </location>
</feature>
<feature type="binding site" evidence="1">
    <location>
        <position position="60"/>
    </location>
    <ligand>
        <name>[4Fe-4S] cluster</name>
        <dbReference type="ChEBI" id="CHEBI:49883"/>
        <label>1</label>
    </ligand>
</feature>
<feature type="binding site" evidence="1">
    <location>
        <position position="63"/>
    </location>
    <ligand>
        <name>[4Fe-4S] cluster</name>
        <dbReference type="ChEBI" id="CHEBI:49883"/>
        <label>1</label>
    </ligand>
</feature>
<feature type="binding site" evidence="1">
    <location>
        <position position="66"/>
    </location>
    <ligand>
        <name>[4Fe-4S] cluster</name>
        <dbReference type="ChEBI" id="CHEBI:49883"/>
        <label>1</label>
    </ligand>
</feature>
<feature type="binding site" evidence="1">
    <location>
        <position position="70"/>
    </location>
    <ligand>
        <name>[4Fe-4S] cluster</name>
        <dbReference type="ChEBI" id="CHEBI:49883"/>
        <label>2</label>
    </ligand>
</feature>
<feature type="binding site" evidence="1">
    <location>
        <position position="105"/>
    </location>
    <ligand>
        <name>[4Fe-4S] cluster</name>
        <dbReference type="ChEBI" id="CHEBI:49883"/>
        <label>2</label>
    </ligand>
</feature>
<feature type="binding site" evidence="1">
    <location>
        <position position="108"/>
    </location>
    <ligand>
        <name>[4Fe-4S] cluster</name>
        <dbReference type="ChEBI" id="CHEBI:49883"/>
        <label>2</label>
    </ligand>
</feature>
<feature type="binding site" evidence="1">
    <location>
        <position position="111"/>
    </location>
    <ligand>
        <name>[4Fe-4S] cluster</name>
        <dbReference type="ChEBI" id="CHEBI:49883"/>
        <label>2</label>
    </ligand>
</feature>
<feature type="binding site" evidence="1">
    <location>
        <position position="115"/>
    </location>
    <ligand>
        <name>[4Fe-4S] cluster</name>
        <dbReference type="ChEBI" id="CHEBI:49883"/>
        <label>1</label>
    </ligand>
</feature>
<gene>
    <name evidence="1" type="primary">nuoI1</name>
    <name type="ordered locus">SCO4570</name>
    <name type="ORF">SCD16A.13c</name>
</gene>
<sequence>MDHKGTDPGFMNPVAGFGVTFKAMFKKRLTEQYPEQQKTTAPRFHGRHQLNRHPDGLEKCVGCELCAWACPADAIYVEGADNTDEERYSPGERYGRVYQINYARCILCGLCIEACPTRALTMTNEFELADSSRANLIFTKEQLLAGLEEGMVDSPHAIYPGTDEQDYYRGLVTEAAPGTVQQVAHSKGEVVQEGDSTFGATEPASEEVIRR</sequence>